<gene>
    <name type="primary">rps8</name>
</gene>
<feature type="chain" id="PRO_0000290980" description="Small ribosomal subunit protein uS8c">
    <location>
        <begin position="1"/>
        <end position="134"/>
    </location>
</feature>
<sequence>MGKDTIADIITSIRNADMNRKGMVRIESTNITESIVKILLREGFVENVRKHRENNHYFLILTLRHRRNKKESYKTFLNLKRISRPGLRIYSNSQRIPRILGGIGIVILSTSQGIMTDREARLKKIGGEILCYIW</sequence>
<comment type="function">
    <text evidence="1">One of the primary rRNA binding proteins, it binds directly to 16S rRNA central domain where it helps coordinate assembly of the platform of the 30S subunit.</text>
</comment>
<comment type="subunit">
    <text evidence="1">Part of the 30S ribosomal subunit.</text>
</comment>
<comment type="subcellular location">
    <subcellularLocation>
        <location>Plastid</location>
        <location>Chloroplast</location>
    </subcellularLocation>
</comment>
<comment type="similarity">
    <text evidence="2">Belongs to the universal ribosomal protein uS8 family.</text>
</comment>
<evidence type="ECO:0000250" key="1"/>
<evidence type="ECO:0000305" key="2"/>
<keyword id="KW-0150">Chloroplast</keyword>
<keyword id="KW-0934">Plastid</keyword>
<keyword id="KW-0687">Ribonucleoprotein</keyword>
<keyword id="KW-0689">Ribosomal protein</keyword>
<keyword id="KW-0694">RNA-binding</keyword>
<keyword id="KW-0699">rRNA-binding</keyword>
<organism>
    <name type="scientific">Draba nemorosa</name>
    <name type="common">Woodland whitlowgrass</name>
    <dbReference type="NCBI Taxonomy" id="171822"/>
    <lineage>
        <taxon>Eukaryota</taxon>
        <taxon>Viridiplantae</taxon>
        <taxon>Streptophyta</taxon>
        <taxon>Embryophyta</taxon>
        <taxon>Tracheophyta</taxon>
        <taxon>Spermatophyta</taxon>
        <taxon>Magnoliopsida</taxon>
        <taxon>eudicotyledons</taxon>
        <taxon>Gunneridae</taxon>
        <taxon>Pentapetalae</taxon>
        <taxon>rosids</taxon>
        <taxon>malvids</taxon>
        <taxon>Brassicales</taxon>
        <taxon>Brassicaceae</taxon>
        <taxon>Arabideae</taxon>
        <taxon>Draba</taxon>
    </lineage>
</organism>
<reference key="1">
    <citation type="submission" date="2007-03" db="EMBL/GenBank/DDBJ databases">
        <title>Sequencing analysis of Draba nemoroza chloroplast DNA.</title>
        <authorList>
            <person name="Hosouchi T."/>
            <person name="Tsuruoka H."/>
            <person name="Kotani H."/>
        </authorList>
    </citation>
    <scope>NUCLEOTIDE SEQUENCE [LARGE SCALE GENOMIC DNA]</scope>
</reference>
<protein>
    <recommendedName>
        <fullName evidence="2">Small ribosomal subunit protein uS8c</fullName>
    </recommendedName>
    <alternativeName>
        <fullName>30S ribosomal protein S8, chloroplastic</fullName>
    </alternativeName>
</protein>
<accession>A4QL54</accession>
<proteinExistence type="inferred from homology"/>
<dbReference type="EMBL" id="AP009373">
    <property type="protein sequence ID" value="BAF50409.1"/>
    <property type="molecule type" value="Genomic_DNA"/>
</dbReference>
<dbReference type="RefSeq" id="YP_001123585.1">
    <property type="nucleotide sequence ID" value="NC_009272.1"/>
</dbReference>
<dbReference type="SMR" id="A4QL54"/>
<dbReference type="GeneID" id="4964789"/>
<dbReference type="GO" id="GO:0009507">
    <property type="term" value="C:chloroplast"/>
    <property type="evidence" value="ECO:0007669"/>
    <property type="project" value="UniProtKB-SubCell"/>
</dbReference>
<dbReference type="GO" id="GO:1990904">
    <property type="term" value="C:ribonucleoprotein complex"/>
    <property type="evidence" value="ECO:0007669"/>
    <property type="project" value="UniProtKB-KW"/>
</dbReference>
<dbReference type="GO" id="GO:0005840">
    <property type="term" value="C:ribosome"/>
    <property type="evidence" value="ECO:0007669"/>
    <property type="project" value="UniProtKB-KW"/>
</dbReference>
<dbReference type="GO" id="GO:0019843">
    <property type="term" value="F:rRNA binding"/>
    <property type="evidence" value="ECO:0007669"/>
    <property type="project" value="UniProtKB-UniRule"/>
</dbReference>
<dbReference type="GO" id="GO:0003735">
    <property type="term" value="F:structural constituent of ribosome"/>
    <property type="evidence" value="ECO:0007669"/>
    <property type="project" value="InterPro"/>
</dbReference>
<dbReference type="GO" id="GO:0006412">
    <property type="term" value="P:translation"/>
    <property type="evidence" value="ECO:0007669"/>
    <property type="project" value="UniProtKB-UniRule"/>
</dbReference>
<dbReference type="FunFam" id="3.30.1490.10:FF:000001">
    <property type="entry name" value="30S ribosomal protein S8"/>
    <property type="match status" value="1"/>
</dbReference>
<dbReference type="FunFam" id="3.30.1370.30:FF:000004">
    <property type="entry name" value="30S ribosomal protein S8, chloroplastic"/>
    <property type="match status" value="1"/>
</dbReference>
<dbReference type="Gene3D" id="3.30.1370.30">
    <property type="match status" value="1"/>
</dbReference>
<dbReference type="Gene3D" id="3.30.1490.10">
    <property type="match status" value="1"/>
</dbReference>
<dbReference type="HAMAP" id="MF_01302_B">
    <property type="entry name" value="Ribosomal_uS8_B"/>
    <property type="match status" value="1"/>
</dbReference>
<dbReference type="InterPro" id="IPR000630">
    <property type="entry name" value="Ribosomal_uS8"/>
</dbReference>
<dbReference type="InterPro" id="IPR047863">
    <property type="entry name" value="Ribosomal_uS8_CS"/>
</dbReference>
<dbReference type="InterPro" id="IPR035987">
    <property type="entry name" value="Ribosomal_uS8_sf"/>
</dbReference>
<dbReference type="NCBIfam" id="NF001109">
    <property type="entry name" value="PRK00136.1"/>
    <property type="match status" value="1"/>
</dbReference>
<dbReference type="PANTHER" id="PTHR11758">
    <property type="entry name" value="40S RIBOSOMAL PROTEIN S15A"/>
    <property type="match status" value="1"/>
</dbReference>
<dbReference type="Pfam" id="PF00410">
    <property type="entry name" value="Ribosomal_S8"/>
    <property type="match status" value="1"/>
</dbReference>
<dbReference type="SUPFAM" id="SSF56047">
    <property type="entry name" value="Ribosomal protein S8"/>
    <property type="match status" value="1"/>
</dbReference>
<dbReference type="PROSITE" id="PS00053">
    <property type="entry name" value="RIBOSOMAL_S8"/>
    <property type="match status" value="1"/>
</dbReference>
<geneLocation type="chloroplast"/>
<name>RR8_DRANE</name>